<proteinExistence type="inferred from homology"/>
<dbReference type="EC" id="2.1.1.33" evidence="2"/>
<dbReference type="EMBL" id="CP000036">
    <property type="protein sequence ID" value="ABB67536.1"/>
    <property type="molecule type" value="Genomic_DNA"/>
</dbReference>
<dbReference type="RefSeq" id="WP_000786903.1">
    <property type="nucleotide sequence ID" value="NC_007613.1"/>
</dbReference>
<dbReference type="SMR" id="Q31WM2"/>
<dbReference type="KEGG" id="sbo:SBO_3030"/>
<dbReference type="HOGENOM" id="CLU_050910_0_1_6"/>
<dbReference type="UniPathway" id="UPA00989"/>
<dbReference type="Proteomes" id="UP000007067">
    <property type="component" value="Chromosome"/>
</dbReference>
<dbReference type="GO" id="GO:0043527">
    <property type="term" value="C:tRNA methyltransferase complex"/>
    <property type="evidence" value="ECO:0007669"/>
    <property type="project" value="TreeGrafter"/>
</dbReference>
<dbReference type="GO" id="GO:0008176">
    <property type="term" value="F:tRNA (guanine(46)-N7)-methyltransferase activity"/>
    <property type="evidence" value="ECO:0007669"/>
    <property type="project" value="UniProtKB-UniRule"/>
</dbReference>
<dbReference type="FunFam" id="3.40.50.150:FF:000024">
    <property type="entry name" value="tRNA (guanine-N(7)-)-methyltransferase"/>
    <property type="match status" value="1"/>
</dbReference>
<dbReference type="Gene3D" id="3.40.50.150">
    <property type="entry name" value="Vaccinia Virus protein VP39"/>
    <property type="match status" value="1"/>
</dbReference>
<dbReference type="HAMAP" id="MF_01057">
    <property type="entry name" value="tRNA_methyltr_TrmB"/>
    <property type="match status" value="1"/>
</dbReference>
<dbReference type="InterPro" id="IPR029063">
    <property type="entry name" value="SAM-dependent_MTases_sf"/>
</dbReference>
<dbReference type="InterPro" id="IPR003358">
    <property type="entry name" value="tRNA_(Gua-N-7)_MeTrfase_Trmb"/>
</dbReference>
<dbReference type="InterPro" id="IPR055361">
    <property type="entry name" value="tRNA_methyltr_TrmB_bact"/>
</dbReference>
<dbReference type="NCBIfam" id="TIGR00091">
    <property type="entry name" value="tRNA (guanosine(46)-N7)-methyltransferase TrmB"/>
    <property type="match status" value="1"/>
</dbReference>
<dbReference type="PANTHER" id="PTHR23417">
    <property type="entry name" value="3-DEOXY-D-MANNO-OCTULOSONIC-ACID TRANSFERASE/TRNA GUANINE-N 7 - -METHYLTRANSFERASE"/>
    <property type="match status" value="1"/>
</dbReference>
<dbReference type="PANTHER" id="PTHR23417:SF14">
    <property type="entry name" value="PENTACOTRIPEPTIDE-REPEAT REGION OF PRORP DOMAIN-CONTAINING PROTEIN"/>
    <property type="match status" value="1"/>
</dbReference>
<dbReference type="Pfam" id="PF02390">
    <property type="entry name" value="Methyltransf_4"/>
    <property type="match status" value="1"/>
</dbReference>
<dbReference type="SUPFAM" id="SSF53335">
    <property type="entry name" value="S-adenosyl-L-methionine-dependent methyltransferases"/>
    <property type="match status" value="1"/>
</dbReference>
<dbReference type="PROSITE" id="PS51625">
    <property type="entry name" value="SAM_MT_TRMB"/>
    <property type="match status" value="1"/>
</dbReference>
<protein>
    <recommendedName>
        <fullName evidence="2">tRNA (guanine-N(7)-)-methyltransferase</fullName>
        <ecNumber evidence="2">2.1.1.33</ecNumber>
    </recommendedName>
    <alternativeName>
        <fullName evidence="2">tRNA (guanine(46)-N(7))-methyltransferase</fullName>
    </alternativeName>
    <alternativeName>
        <fullName evidence="2">tRNA(m7G46)-methyltransferase</fullName>
    </alternativeName>
</protein>
<name>TRMB_SHIBS</name>
<comment type="function">
    <text evidence="2">Catalyzes the formation of N(7)-methylguanine at position 46 (m7G46) in tRNA.</text>
</comment>
<comment type="catalytic activity">
    <reaction evidence="2">
        <text>guanosine(46) in tRNA + S-adenosyl-L-methionine = N(7)-methylguanosine(46) in tRNA + S-adenosyl-L-homocysteine</text>
        <dbReference type="Rhea" id="RHEA:42708"/>
        <dbReference type="Rhea" id="RHEA-COMP:10188"/>
        <dbReference type="Rhea" id="RHEA-COMP:10189"/>
        <dbReference type="ChEBI" id="CHEBI:57856"/>
        <dbReference type="ChEBI" id="CHEBI:59789"/>
        <dbReference type="ChEBI" id="CHEBI:74269"/>
        <dbReference type="ChEBI" id="CHEBI:74480"/>
        <dbReference type="EC" id="2.1.1.33"/>
    </reaction>
</comment>
<comment type="pathway">
    <text evidence="2">tRNA modification; N(7)-methylguanine-tRNA biosynthesis.</text>
</comment>
<comment type="subunit">
    <text evidence="2">Monomer.</text>
</comment>
<comment type="similarity">
    <text evidence="2">Belongs to the class I-like SAM-binding methyltransferase superfamily. TrmB family.</text>
</comment>
<organism>
    <name type="scientific">Shigella boydii serotype 4 (strain Sb227)</name>
    <dbReference type="NCBI Taxonomy" id="300268"/>
    <lineage>
        <taxon>Bacteria</taxon>
        <taxon>Pseudomonadati</taxon>
        <taxon>Pseudomonadota</taxon>
        <taxon>Gammaproteobacteria</taxon>
        <taxon>Enterobacterales</taxon>
        <taxon>Enterobacteriaceae</taxon>
        <taxon>Shigella</taxon>
    </lineage>
</organism>
<accession>Q31WM2</accession>
<feature type="chain" id="PRO_0000229195" description="tRNA (guanine-N(7)-)-methyltransferase">
    <location>
        <begin position="1"/>
        <end position="239"/>
    </location>
</feature>
<feature type="region of interest" description="Interaction with RNA" evidence="2">
    <location>
        <begin position="150"/>
        <end position="155"/>
    </location>
</feature>
<feature type="active site" evidence="1">
    <location>
        <position position="144"/>
    </location>
</feature>
<feature type="binding site" evidence="2">
    <location>
        <position position="69"/>
    </location>
    <ligand>
        <name>S-adenosyl-L-methionine</name>
        <dbReference type="ChEBI" id="CHEBI:59789"/>
    </ligand>
</feature>
<feature type="binding site" evidence="2">
    <location>
        <position position="94"/>
    </location>
    <ligand>
        <name>S-adenosyl-L-methionine</name>
        <dbReference type="ChEBI" id="CHEBI:59789"/>
    </ligand>
</feature>
<feature type="binding site" evidence="2">
    <location>
        <position position="121"/>
    </location>
    <ligand>
        <name>S-adenosyl-L-methionine</name>
        <dbReference type="ChEBI" id="CHEBI:59789"/>
    </ligand>
</feature>
<feature type="binding site" evidence="2">
    <location>
        <position position="144"/>
    </location>
    <ligand>
        <name>S-adenosyl-L-methionine</name>
        <dbReference type="ChEBI" id="CHEBI:59789"/>
    </ligand>
</feature>
<feature type="binding site" evidence="2">
    <location>
        <position position="148"/>
    </location>
    <ligand>
        <name>substrate</name>
    </ligand>
</feature>
<feature type="binding site" evidence="2">
    <location>
        <position position="180"/>
    </location>
    <ligand>
        <name>substrate</name>
    </ligand>
</feature>
<feature type="binding site" evidence="2">
    <location>
        <begin position="217"/>
        <end position="220"/>
    </location>
    <ligand>
        <name>substrate</name>
    </ligand>
</feature>
<evidence type="ECO:0000250" key="1"/>
<evidence type="ECO:0000255" key="2">
    <source>
        <dbReference type="HAMAP-Rule" id="MF_01057"/>
    </source>
</evidence>
<sequence>MKNDVISPEFDENGRPLRRIRSFVRRQGRLTKGQEHALENYWPVMGVEFSEDMLDFPALFGREAPVTLEIGFGMGASLVAMAKDRPEQDFLGIEVHSPGVGACLASAHEEGLNNLRVMCHDAVEVLHKMIPDNSLRMVQLFFPDPWHKARHNKRRIVQVPFAELVKSKLQLGGVFHMATDWEPYAEHMLEVMSSIDGYKNLSESNDYVPRPASRPVTKFEQRGHRLGHGVWDLMFERVK</sequence>
<keyword id="KW-0489">Methyltransferase</keyword>
<keyword id="KW-0949">S-adenosyl-L-methionine</keyword>
<keyword id="KW-0808">Transferase</keyword>
<keyword id="KW-0819">tRNA processing</keyword>
<reference key="1">
    <citation type="journal article" date="2005" name="Nucleic Acids Res.">
        <title>Genome dynamics and diversity of Shigella species, the etiologic agents of bacillary dysentery.</title>
        <authorList>
            <person name="Yang F."/>
            <person name="Yang J."/>
            <person name="Zhang X."/>
            <person name="Chen L."/>
            <person name="Jiang Y."/>
            <person name="Yan Y."/>
            <person name="Tang X."/>
            <person name="Wang J."/>
            <person name="Xiong Z."/>
            <person name="Dong J."/>
            <person name="Xue Y."/>
            <person name="Zhu Y."/>
            <person name="Xu X."/>
            <person name="Sun L."/>
            <person name="Chen S."/>
            <person name="Nie H."/>
            <person name="Peng J."/>
            <person name="Xu J."/>
            <person name="Wang Y."/>
            <person name="Yuan Z."/>
            <person name="Wen Y."/>
            <person name="Yao Z."/>
            <person name="Shen Y."/>
            <person name="Qiang B."/>
            <person name="Hou Y."/>
            <person name="Yu J."/>
            <person name="Jin Q."/>
        </authorList>
    </citation>
    <scope>NUCLEOTIDE SEQUENCE [LARGE SCALE GENOMIC DNA]</scope>
    <source>
        <strain>Sb227</strain>
    </source>
</reference>
<gene>
    <name evidence="2" type="primary">trmB</name>
    <name type="ordered locus">SBO_3030</name>
</gene>